<dbReference type="EC" id="2.1.1.-" evidence="1"/>
<dbReference type="EC" id="2.1.1.35" evidence="1"/>
<dbReference type="EMBL" id="AP008232">
    <property type="protein sequence ID" value="BAE75429.1"/>
    <property type="molecule type" value="Genomic_DNA"/>
</dbReference>
<dbReference type="RefSeq" id="WP_011411966.1">
    <property type="nucleotide sequence ID" value="NC_007712.1"/>
</dbReference>
<dbReference type="SMR" id="Q2NQZ6"/>
<dbReference type="STRING" id="343509.SG2154"/>
<dbReference type="KEGG" id="sgl:SG2154"/>
<dbReference type="eggNOG" id="COG2265">
    <property type="taxonomic scope" value="Bacteria"/>
</dbReference>
<dbReference type="HOGENOM" id="CLU_043022_0_0_6"/>
<dbReference type="OrthoDB" id="9804590at2"/>
<dbReference type="BioCyc" id="SGLO343509:SGP1_RS19910-MONOMER"/>
<dbReference type="Proteomes" id="UP000001932">
    <property type="component" value="Chromosome"/>
</dbReference>
<dbReference type="GO" id="GO:0005829">
    <property type="term" value="C:cytosol"/>
    <property type="evidence" value="ECO:0007669"/>
    <property type="project" value="TreeGrafter"/>
</dbReference>
<dbReference type="GO" id="GO:0019843">
    <property type="term" value="F:rRNA binding"/>
    <property type="evidence" value="ECO:0007669"/>
    <property type="project" value="TreeGrafter"/>
</dbReference>
<dbReference type="GO" id="GO:0030697">
    <property type="term" value="F:tRNA (uracil(54)-C5)-methyltransferase activity, S-adenosyl methionine-dependent"/>
    <property type="evidence" value="ECO:0007669"/>
    <property type="project" value="UniProtKB-UniRule"/>
</dbReference>
<dbReference type="GO" id="GO:0000049">
    <property type="term" value="F:tRNA binding"/>
    <property type="evidence" value="ECO:0007669"/>
    <property type="project" value="TreeGrafter"/>
</dbReference>
<dbReference type="GO" id="GO:0030488">
    <property type="term" value="P:tRNA methylation"/>
    <property type="evidence" value="ECO:0007669"/>
    <property type="project" value="UniProtKB-UniRule"/>
</dbReference>
<dbReference type="CDD" id="cd02440">
    <property type="entry name" value="AdoMet_MTases"/>
    <property type="match status" value="1"/>
</dbReference>
<dbReference type="FunFam" id="2.40.50.1070:FF:000001">
    <property type="entry name" value="tRNA/tmRNA (uracil-C(5))-methyltransferase"/>
    <property type="match status" value="1"/>
</dbReference>
<dbReference type="FunFam" id="3.40.50.150:FF:000012">
    <property type="entry name" value="tRNA/tmRNA (uracil-C(5))-methyltransferase"/>
    <property type="match status" value="1"/>
</dbReference>
<dbReference type="Gene3D" id="2.40.50.1070">
    <property type="match status" value="1"/>
</dbReference>
<dbReference type="Gene3D" id="3.40.50.150">
    <property type="entry name" value="Vaccinia Virus protein VP39"/>
    <property type="match status" value="1"/>
</dbReference>
<dbReference type="HAMAP" id="MF_01011">
    <property type="entry name" value="RNA_methyltr_TrmA"/>
    <property type="match status" value="1"/>
</dbReference>
<dbReference type="InterPro" id="IPR030390">
    <property type="entry name" value="MeTrfase_TrmA_AS"/>
</dbReference>
<dbReference type="InterPro" id="IPR030391">
    <property type="entry name" value="MeTrfase_TrmA_CS"/>
</dbReference>
<dbReference type="InterPro" id="IPR029063">
    <property type="entry name" value="SAM-dependent_MTases_sf"/>
</dbReference>
<dbReference type="InterPro" id="IPR011869">
    <property type="entry name" value="TrmA_MeTrfase"/>
</dbReference>
<dbReference type="InterPro" id="IPR010280">
    <property type="entry name" value="U5_MeTrfase_fam"/>
</dbReference>
<dbReference type="NCBIfam" id="TIGR02143">
    <property type="entry name" value="trmA_only"/>
    <property type="match status" value="1"/>
</dbReference>
<dbReference type="PANTHER" id="PTHR47790">
    <property type="entry name" value="TRNA/TMRNA (URACIL-C(5))-METHYLTRANSFERASE"/>
    <property type="match status" value="1"/>
</dbReference>
<dbReference type="PANTHER" id="PTHR47790:SF2">
    <property type="entry name" value="TRNA_TMRNA (URACIL-C(5))-METHYLTRANSFERASE"/>
    <property type="match status" value="1"/>
</dbReference>
<dbReference type="Pfam" id="PF05958">
    <property type="entry name" value="tRNA_U5-meth_tr"/>
    <property type="match status" value="1"/>
</dbReference>
<dbReference type="SUPFAM" id="SSF53335">
    <property type="entry name" value="S-adenosyl-L-methionine-dependent methyltransferases"/>
    <property type="match status" value="1"/>
</dbReference>
<dbReference type="PROSITE" id="PS51687">
    <property type="entry name" value="SAM_MT_RNA_M5U"/>
    <property type="match status" value="1"/>
</dbReference>
<dbReference type="PROSITE" id="PS01230">
    <property type="entry name" value="TRMA_1"/>
    <property type="match status" value="1"/>
</dbReference>
<dbReference type="PROSITE" id="PS01231">
    <property type="entry name" value="TRMA_2"/>
    <property type="match status" value="1"/>
</dbReference>
<reference key="1">
    <citation type="journal article" date="2006" name="Genome Res.">
        <title>Massive genome erosion and functional adaptations provide insights into the symbiotic lifestyle of Sodalis glossinidius in the tsetse host.</title>
        <authorList>
            <person name="Toh H."/>
            <person name="Weiss B.L."/>
            <person name="Perkin S.A.H."/>
            <person name="Yamashita A."/>
            <person name="Oshima K."/>
            <person name="Hattori M."/>
            <person name="Aksoy S."/>
        </authorList>
    </citation>
    <scope>NUCLEOTIDE SEQUENCE [LARGE SCALE GENOMIC DNA]</scope>
    <source>
        <strain>morsitans</strain>
    </source>
</reference>
<evidence type="ECO:0000255" key="1">
    <source>
        <dbReference type="HAMAP-Rule" id="MF_01011"/>
    </source>
</evidence>
<keyword id="KW-0489">Methyltransferase</keyword>
<keyword id="KW-0949">S-adenosyl-L-methionine</keyword>
<keyword id="KW-0808">Transferase</keyword>
<keyword id="KW-0819">tRNA processing</keyword>
<proteinExistence type="inferred from homology"/>
<protein>
    <recommendedName>
        <fullName evidence="1">tRNA/tmRNA (uracil-C(5))-methyltransferase</fullName>
        <ecNumber evidence="1">2.1.1.-</ecNumber>
        <ecNumber evidence="1">2.1.1.35</ecNumber>
    </recommendedName>
    <alternativeName>
        <fullName evidence="1">tRNA (uracil(54)-C(5))-methyltransferase</fullName>
    </alternativeName>
    <alternativeName>
        <fullName evidence="1">tRNA(m5U54)-methyltransferase</fullName>
        <shortName evidence="1">RUMT</shortName>
    </alternativeName>
    <alternativeName>
        <fullName evidence="1">tmRNA (uracil(341)-C(5))-methyltransferase</fullName>
    </alternativeName>
</protein>
<name>TRMA_SODGM</name>
<accession>Q2NQZ6</accession>
<comment type="function">
    <text evidence="1">Dual-specificity methyltransferase that catalyzes the formation of 5-methyluridine at position 54 (m5U54) in all tRNAs, and that of position 341 (m5U341) in tmRNA (transfer-mRNA).</text>
</comment>
<comment type="catalytic activity">
    <reaction evidence="1">
        <text>uridine(54) in tRNA + S-adenosyl-L-methionine = 5-methyluridine(54) in tRNA + S-adenosyl-L-homocysteine + H(+)</text>
        <dbReference type="Rhea" id="RHEA:42712"/>
        <dbReference type="Rhea" id="RHEA-COMP:10167"/>
        <dbReference type="Rhea" id="RHEA-COMP:10193"/>
        <dbReference type="ChEBI" id="CHEBI:15378"/>
        <dbReference type="ChEBI" id="CHEBI:57856"/>
        <dbReference type="ChEBI" id="CHEBI:59789"/>
        <dbReference type="ChEBI" id="CHEBI:65315"/>
        <dbReference type="ChEBI" id="CHEBI:74447"/>
        <dbReference type="EC" id="2.1.1.35"/>
    </reaction>
</comment>
<comment type="catalytic activity">
    <reaction evidence="1">
        <text>uridine(341) in tmRNA + S-adenosyl-L-methionine = 5-methyluridine(341) in tmRNA + S-adenosyl-L-homocysteine + H(+)</text>
        <dbReference type="Rhea" id="RHEA:43612"/>
        <dbReference type="Rhea" id="RHEA-COMP:10630"/>
        <dbReference type="Rhea" id="RHEA-COMP:10631"/>
        <dbReference type="ChEBI" id="CHEBI:15378"/>
        <dbReference type="ChEBI" id="CHEBI:57856"/>
        <dbReference type="ChEBI" id="CHEBI:59789"/>
        <dbReference type="ChEBI" id="CHEBI:65315"/>
        <dbReference type="ChEBI" id="CHEBI:74447"/>
    </reaction>
</comment>
<comment type="similarity">
    <text evidence="1">Belongs to the class I-like SAM-binding methyltransferase superfamily. RNA M5U methyltransferase family. TrmA subfamily.</text>
</comment>
<feature type="chain" id="PRO_0000281468" description="tRNA/tmRNA (uracil-C(5))-methyltransferase">
    <location>
        <begin position="1"/>
        <end position="370"/>
    </location>
</feature>
<feature type="active site" description="Nucleophile" evidence="1">
    <location>
        <position position="324"/>
    </location>
</feature>
<feature type="active site" description="Proton acceptor" evidence="1">
    <location>
        <position position="358"/>
    </location>
</feature>
<feature type="binding site" evidence="1">
    <location>
        <position position="190"/>
    </location>
    <ligand>
        <name>S-adenosyl-L-methionine</name>
        <dbReference type="ChEBI" id="CHEBI:59789"/>
    </ligand>
</feature>
<feature type="binding site" evidence="1">
    <location>
        <position position="218"/>
    </location>
    <ligand>
        <name>S-adenosyl-L-methionine</name>
        <dbReference type="ChEBI" id="CHEBI:59789"/>
    </ligand>
</feature>
<feature type="binding site" evidence="1">
    <location>
        <position position="223"/>
    </location>
    <ligand>
        <name>S-adenosyl-L-methionine</name>
        <dbReference type="ChEBI" id="CHEBI:59789"/>
    </ligand>
</feature>
<feature type="binding site" evidence="1">
    <location>
        <position position="239"/>
    </location>
    <ligand>
        <name>S-adenosyl-L-methionine</name>
        <dbReference type="ChEBI" id="CHEBI:59789"/>
    </ligand>
</feature>
<feature type="binding site" evidence="1">
    <location>
        <position position="299"/>
    </location>
    <ligand>
        <name>S-adenosyl-L-methionine</name>
        <dbReference type="ChEBI" id="CHEBI:59789"/>
    </ligand>
</feature>
<gene>
    <name evidence="1" type="primary">trmA</name>
    <name type="ordered locus">SG2154</name>
</gene>
<organism>
    <name type="scientific">Sodalis glossinidius (strain morsitans)</name>
    <dbReference type="NCBI Taxonomy" id="343509"/>
    <lineage>
        <taxon>Bacteria</taxon>
        <taxon>Pseudomonadati</taxon>
        <taxon>Pseudomonadota</taxon>
        <taxon>Gammaproteobacteria</taxon>
        <taxon>Enterobacterales</taxon>
        <taxon>Bruguierivoracaceae</taxon>
        <taxon>Sodalis</taxon>
    </lineage>
</organism>
<sequence>MTPETLPIDQYEQQLAEKAARLRQMMLAFQAPEAQIFRSQPAHYRMRAEFRIWHDEDDLYHIMFDPQTKARIRIDHFMPGSPLINALMAEMMTAIRPEPLLRAKLFQIDYLTTQSGEAVVTLIYHRPLDDAWRECAAGLRDALRARGYHIQFIGRANKTKIYLDRDYVDERLTVAGRTLIYQQIENSFTQPNAGINVHMLEWALAATEGAQGDLLELYCGNGNFSLALARHFDRVLATEIAKLSVEAAHYNIAANHIDNVQIVRMSAEEFTQAMRKEREFTRLKEIDLQSYRCETIFVDPPRSGLDEATVSMVQAYPQILYISCNPDSLCRNLSTLSTTHTIERLALFDQFPYTHHMECGVLLVRKATAV</sequence>